<dbReference type="EC" id="6.2.1.5" evidence="1"/>
<dbReference type="EMBL" id="CU329672">
    <property type="protein sequence ID" value="CAA22492.1"/>
    <property type="molecule type" value="Genomic_DNA"/>
</dbReference>
<dbReference type="PIR" id="T41038">
    <property type="entry name" value="T41038"/>
</dbReference>
<dbReference type="SMR" id="O94415"/>
<dbReference type="BioGRID" id="275739">
    <property type="interactions" value="12"/>
</dbReference>
<dbReference type="FunCoup" id="O94415">
    <property type="interactions" value="392"/>
</dbReference>
<dbReference type="STRING" id="284812.O94415"/>
<dbReference type="PaxDb" id="4896-SPCC1620.08.1"/>
<dbReference type="EnsemblFungi" id="SPCC1620.08.1">
    <property type="protein sequence ID" value="SPCC1620.08.1:pep"/>
    <property type="gene ID" value="SPCC1620.08"/>
</dbReference>
<dbReference type="KEGG" id="spo:2539168"/>
<dbReference type="PomBase" id="SPCC1620.08"/>
<dbReference type="VEuPathDB" id="FungiDB:SPCC1620.08"/>
<dbReference type="eggNOG" id="KOG2799">
    <property type="taxonomic scope" value="Eukaryota"/>
</dbReference>
<dbReference type="HOGENOM" id="CLU_037430_0_0_1"/>
<dbReference type="InParanoid" id="O94415"/>
<dbReference type="OMA" id="ITACDEV"/>
<dbReference type="PhylomeDB" id="O94415"/>
<dbReference type="Reactome" id="R-SPO-71403">
    <property type="pathway name" value="Citric acid cycle (TCA cycle)"/>
</dbReference>
<dbReference type="UniPathway" id="UPA00223">
    <property type="reaction ID" value="UER00999"/>
</dbReference>
<dbReference type="PRO" id="PR:O94415"/>
<dbReference type="Proteomes" id="UP000002485">
    <property type="component" value="Chromosome III"/>
</dbReference>
<dbReference type="GO" id="GO:0005739">
    <property type="term" value="C:mitochondrion"/>
    <property type="evidence" value="ECO:0007005"/>
    <property type="project" value="PomBase"/>
</dbReference>
<dbReference type="GO" id="GO:0042709">
    <property type="term" value="C:succinate-CoA ligase complex"/>
    <property type="evidence" value="ECO:0000318"/>
    <property type="project" value="GO_Central"/>
</dbReference>
<dbReference type="GO" id="GO:0005524">
    <property type="term" value="F:ATP binding"/>
    <property type="evidence" value="ECO:0007669"/>
    <property type="project" value="UniProtKB-UniRule"/>
</dbReference>
<dbReference type="GO" id="GO:0000287">
    <property type="term" value="F:magnesium ion binding"/>
    <property type="evidence" value="ECO:0007669"/>
    <property type="project" value="UniProtKB-UniRule"/>
</dbReference>
<dbReference type="GO" id="GO:0004775">
    <property type="term" value="F:succinate-CoA ligase (ADP-forming) activity"/>
    <property type="evidence" value="ECO:0000318"/>
    <property type="project" value="GO_Central"/>
</dbReference>
<dbReference type="GO" id="GO:0006104">
    <property type="term" value="P:succinyl-CoA metabolic process"/>
    <property type="evidence" value="ECO:0000318"/>
    <property type="project" value="GO_Central"/>
</dbReference>
<dbReference type="GO" id="GO:0006099">
    <property type="term" value="P:tricarboxylic acid cycle"/>
    <property type="evidence" value="ECO:0000269"/>
    <property type="project" value="PomBase"/>
</dbReference>
<dbReference type="FunFam" id="3.30.470.20:FF:000002">
    <property type="entry name" value="Succinate--CoA ligase [ADP-forming] subunit beta"/>
    <property type="match status" value="1"/>
</dbReference>
<dbReference type="FunFam" id="3.40.50.261:FF:000001">
    <property type="entry name" value="Succinate--CoA ligase [ADP-forming] subunit beta"/>
    <property type="match status" value="1"/>
</dbReference>
<dbReference type="FunFam" id="3.30.1490.20:FF:000004">
    <property type="entry name" value="Succinate--CoA ligase [ADP-forming] subunit beta, mitochondrial"/>
    <property type="match status" value="1"/>
</dbReference>
<dbReference type="Gene3D" id="3.30.1490.20">
    <property type="entry name" value="ATP-grasp fold, A domain"/>
    <property type="match status" value="1"/>
</dbReference>
<dbReference type="Gene3D" id="3.30.470.20">
    <property type="entry name" value="ATP-grasp fold, B domain"/>
    <property type="match status" value="1"/>
</dbReference>
<dbReference type="Gene3D" id="3.40.50.261">
    <property type="entry name" value="Succinyl-CoA synthetase domains"/>
    <property type="match status" value="1"/>
</dbReference>
<dbReference type="HAMAP" id="MF_00558">
    <property type="entry name" value="Succ_CoA_beta"/>
    <property type="match status" value="1"/>
</dbReference>
<dbReference type="InterPro" id="IPR013650">
    <property type="entry name" value="ATP-grasp_succ-CoA_synth-type"/>
</dbReference>
<dbReference type="InterPro" id="IPR013815">
    <property type="entry name" value="ATP_grasp_subdomain_1"/>
</dbReference>
<dbReference type="InterPro" id="IPR017866">
    <property type="entry name" value="Succ-CoA_synthase_bsu_CS"/>
</dbReference>
<dbReference type="InterPro" id="IPR005811">
    <property type="entry name" value="SUCC_ACL_C"/>
</dbReference>
<dbReference type="InterPro" id="IPR005809">
    <property type="entry name" value="Succ_CoA_ligase-like_bsu"/>
</dbReference>
<dbReference type="InterPro" id="IPR016102">
    <property type="entry name" value="Succinyl-CoA_synth-like"/>
</dbReference>
<dbReference type="NCBIfam" id="NF001913">
    <property type="entry name" value="PRK00696.1"/>
    <property type="match status" value="1"/>
</dbReference>
<dbReference type="NCBIfam" id="TIGR01016">
    <property type="entry name" value="sucCoAbeta"/>
    <property type="match status" value="1"/>
</dbReference>
<dbReference type="PANTHER" id="PTHR11815:SF1">
    <property type="entry name" value="SUCCINATE--COA LIGASE [ADP-FORMING] SUBUNIT BETA, MITOCHONDRIAL"/>
    <property type="match status" value="1"/>
</dbReference>
<dbReference type="PANTHER" id="PTHR11815">
    <property type="entry name" value="SUCCINYL-COA SYNTHETASE BETA CHAIN"/>
    <property type="match status" value="1"/>
</dbReference>
<dbReference type="Pfam" id="PF08442">
    <property type="entry name" value="ATP-grasp_2"/>
    <property type="match status" value="1"/>
</dbReference>
<dbReference type="Pfam" id="PF00549">
    <property type="entry name" value="Ligase_CoA"/>
    <property type="match status" value="1"/>
</dbReference>
<dbReference type="PIRSF" id="PIRSF001554">
    <property type="entry name" value="SucCS_beta"/>
    <property type="match status" value="1"/>
</dbReference>
<dbReference type="SUPFAM" id="SSF56059">
    <property type="entry name" value="Glutathione synthetase ATP-binding domain-like"/>
    <property type="match status" value="1"/>
</dbReference>
<dbReference type="SUPFAM" id="SSF52210">
    <property type="entry name" value="Succinyl-CoA synthetase domains"/>
    <property type="match status" value="1"/>
</dbReference>
<dbReference type="PROSITE" id="PS01217">
    <property type="entry name" value="SUCCINYL_COA_LIG_3"/>
    <property type="match status" value="1"/>
</dbReference>
<feature type="transit peptide" description="Mitochondrion" evidence="1">
    <location>
        <begin position="1"/>
        <end position="23"/>
    </location>
</feature>
<feature type="chain" id="PRO_0000033364" description="Succinate--CoA ligase [ADP-forming] subunit beta, mitochondrial" evidence="1">
    <location>
        <begin position="24"/>
        <end position="433"/>
    </location>
</feature>
<feature type="domain" description="ATP-grasp" evidence="1">
    <location>
        <begin position="31"/>
        <end position="273"/>
    </location>
</feature>
<feature type="binding site" evidence="1">
    <location>
        <position position="68"/>
    </location>
    <ligand>
        <name>ATP</name>
        <dbReference type="ChEBI" id="CHEBI:30616"/>
    </ligand>
</feature>
<feature type="binding site" evidence="1">
    <location>
        <begin position="75"/>
        <end position="77"/>
    </location>
    <ligand>
        <name>ATP</name>
        <dbReference type="ChEBI" id="CHEBI:30616"/>
    </ligand>
</feature>
<feature type="binding site" evidence="1">
    <location>
        <position position="136"/>
    </location>
    <ligand>
        <name>ATP</name>
        <dbReference type="ChEBI" id="CHEBI:30616"/>
    </ligand>
</feature>
<feature type="binding site" evidence="1">
    <location>
        <position position="228"/>
    </location>
    <ligand>
        <name>Mg(2+)</name>
        <dbReference type="ChEBI" id="CHEBI:18420"/>
    </ligand>
</feature>
<feature type="binding site" evidence="1">
    <location>
        <position position="242"/>
    </location>
    <ligand>
        <name>Mg(2+)</name>
        <dbReference type="ChEBI" id="CHEBI:18420"/>
    </ligand>
</feature>
<feature type="binding site" evidence="1">
    <location>
        <position position="293"/>
    </location>
    <ligand>
        <name>substrate</name>
        <note>ligand shared with subunit alpha</note>
    </ligand>
</feature>
<feature type="binding site" evidence="1">
    <location>
        <begin position="350"/>
        <end position="352"/>
    </location>
    <ligand>
        <name>substrate</name>
        <note>ligand shared with subunit alpha</note>
    </ligand>
</feature>
<reference key="1">
    <citation type="journal article" date="2002" name="Nature">
        <title>The genome sequence of Schizosaccharomyces pombe.</title>
        <authorList>
            <person name="Wood V."/>
            <person name="Gwilliam R."/>
            <person name="Rajandream M.A."/>
            <person name="Lyne M.H."/>
            <person name="Lyne R."/>
            <person name="Stewart A."/>
            <person name="Sgouros J.G."/>
            <person name="Peat N."/>
            <person name="Hayles J."/>
            <person name="Baker S.G."/>
            <person name="Basham D."/>
            <person name="Bowman S."/>
            <person name="Brooks K."/>
            <person name="Brown D."/>
            <person name="Brown S."/>
            <person name="Chillingworth T."/>
            <person name="Churcher C.M."/>
            <person name="Collins M."/>
            <person name="Connor R."/>
            <person name="Cronin A."/>
            <person name="Davis P."/>
            <person name="Feltwell T."/>
            <person name="Fraser A."/>
            <person name="Gentles S."/>
            <person name="Goble A."/>
            <person name="Hamlin N."/>
            <person name="Harris D.E."/>
            <person name="Hidalgo J."/>
            <person name="Hodgson G."/>
            <person name="Holroyd S."/>
            <person name="Hornsby T."/>
            <person name="Howarth S."/>
            <person name="Huckle E.J."/>
            <person name="Hunt S."/>
            <person name="Jagels K."/>
            <person name="James K.D."/>
            <person name="Jones L."/>
            <person name="Jones M."/>
            <person name="Leather S."/>
            <person name="McDonald S."/>
            <person name="McLean J."/>
            <person name="Mooney P."/>
            <person name="Moule S."/>
            <person name="Mungall K.L."/>
            <person name="Murphy L.D."/>
            <person name="Niblett D."/>
            <person name="Odell C."/>
            <person name="Oliver K."/>
            <person name="O'Neil S."/>
            <person name="Pearson D."/>
            <person name="Quail M.A."/>
            <person name="Rabbinowitsch E."/>
            <person name="Rutherford K.M."/>
            <person name="Rutter S."/>
            <person name="Saunders D."/>
            <person name="Seeger K."/>
            <person name="Sharp S."/>
            <person name="Skelton J."/>
            <person name="Simmonds M.N."/>
            <person name="Squares R."/>
            <person name="Squares S."/>
            <person name="Stevens K."/>
            <person name="Taylor K."/>
            <person name="Taylor R.G."/>
            <person name="Tivey A."/>
            <person name="Walsh S.V."/>
            <person name="Warren T."/>
            <person name="Whitehead S."/>
            <person name="Woodward J.R."/>
            <person name="Volckaert G."/>
            <person name="Aert R."/>
            <person name="Robben J."/>
            <person name="Grymonprez B."/>
            <person name="Weltjens I."/>
            <person name="Vanstreels E."/>
            <person name="Rieger M."/>
            <person name="Schaefer M."/>
            <person name="Mueller-Auer S."/>
            <person name="Gabel C."/>
            <person name="Fuchs M."/>
            <person name="Duesterhoeft A."/>
            <person name="Fritzc C."/>
            <person name="Holzer E."/>
            <person name="Moestl D."/>
            <person name="Hilbert H."/>
            <person name="Borzym K."/>
            <person name="Langer I."/>
            <person name="Beck A."/>
            <person name="Lehrach H."/>
            <person name="Reinhardt R."/>
            <person name="Pohl T.M."/>
            <person name="Eger P."/>
            <person name="Zimmermann W."/>
            <person name="Wedler H."/>
            <person name="Wambutt R."/>
            <person name="Purnelle B."/>
            <person name="Goffeau A."/>
            <person name="Cadieu E."/>
            <person name="Dreano S."/>
            <person name="Gloux S."/>
            <person name="Lelaure V."/>
            <person name="Mottier S."/>
            <person name="Galibert F."/>
            <person name="Aves S.J."/>
            <person name="Xiang Z."/>
            <person name="Hunt C."/>
            <person name="Moore K."/>
            <person name="Hurst S.M."/>
            <person name="Lucas M."/>
            <person name="Rochet M."/>
            <person name="Gaillardin C."/>
            <person name="Tallada V.A."/>
            <person name="Garzon A."/>
            <person name="Thode G."/>
            <person name="Daga R.R."/>
            <person name="Cruzado L."/>
            <person name="Jimenez J."/>
            <person name="Sanchez M."/>
            <person name="del Rey F."/>
            <person name="Benito J."/>
            <person name="Dominguez A."/>
            <person name="Revuelta J.L."/>
            <person name="Moreno S."/>
            <person name="Armstrong J."/>
            <person name="Forsburg S.L."/>
            <person name="Cerutti L."/>
            <person name="Lowe T."/>
            <person name="McCombie W.R."/>
            <person name="Paulsen I."/>
            <person name="Potashkin J."/>
            <person name="Shpakovski G.V."/>
            <person name="Ussery D."/>
            <person name="Barrell B.G."/>
            <person name="Nurse P."/>
        </authorList>
    </citation>
    <scope>NUCLEOTIDE SEQUENCE [LARGE SCALE GENOMIC DNA]</scope>
    <source>
        <strain>972 / ATCC 24843</strain>
    </source>
</reference>
<reference key="2">
    <citation type="journal article" date="2006" name="Nat. Biotechnol.">
        <title>ORFeome cloning and global analysis of protein localization in the fission yeast Schizosaccharomyces pombe.</title>
        <authorList>
            <person name="Matsuyama A."/>
            <person name="Arai R."/>
            <person name="Yashiroda Y."/>
            <person name="Shirai A."/>
            <person name="Kamata A."/>
            <person name="Sekido S."/>
            <person name="Kobayashi Y."/>
            <person name="Hashimoto A."/>
            <person name="Hamamoto M."/>
            <person name="Hiraoka Y."/>
            <person name="Horinouchi S."/>
            <person name="Yoshida M."/>
        </authorList>
    </citation>
    <scope>SUBCELLULAR LOCATION [LARGE SCALE ANALYSIS]</scope>
</reference>
<gene>
    <name evidence="3" type="ORF">SPCC1620.08</name>
</gene>
<organism>
    <name type="scientific">Schizosaccharomyces pombe (strain 972 / ATCC 24843)</name>
    <name type="common">Fission yeast</name>
    <dbReference type="NCBI Taxonomy" id="284812"/>
    <lineage>
        <taxon>Eukaryota</taxon>
        <taxon>Fungi</taxon>
        <taxon>Dikarya</taxon>
        <taxon>Ascomycota</taxon>
        <taxon>Taphrinomycotina</taxon>
        <taxon>Schizosaccharomycetes</taxon>
        <taxon>Schizosaccharomycetales</taxon>
        <taxon>Schizosaccharomycetaceae</taxon>
        <taxon>Schizosaccharomyces</taxon>
    </lineage>
</organism>
<sequence>MLTRSVLRKAPRAFSPFLQKRNLALHEYISHDILRKFGVDVPRGAPARSGEEAEKVARDLKVTDLVVKAQVLAGGRGKGQFDSGLRGGVRPVYDATEARMFAEQMIGHKLITRQTGPAGKICNVVYVCERKFIRKEYYFAILMDRENQCPMIVASDQGGVDIETVAAENPSAIIKRSLPNSPNLDPHIAEELVDKLGFSSSSKPKAVDAIVKLYKVFNDCDATQVEINPLAETTDHKVLCMDAKLNFDDNAEFRHSNIFVLRDISQEDPDEARAAKVGLNFIKLDGNIGCLVNGAGLAMATMDIIKLHGGEPANFLDVGGNANAEAIREAFSLITNDPKTTAIFVNIFGGIVRCDVIAKGLISVVSALNLNIPIICRLQGTNQGAAKEVINNSGLRIFSFDDLDEAAKKACRFSRVVEMAREADVNVSFELPL</sequence>
<name>SUCB_SCHPO</name>
<proteinExistence type="inferred from homology"/>
<keyword id="KW-0067">ATP-binding</keyword>
<keyword id="KW-0436">Ligase</keyword>
<keyword id="KW-0460">Magnesium</keyword>
<keyword id="KW-0479">Metal-binding</keyword>
<keyword id="KW-0496">Mitochondrion</keyword>
<keyword id="KW-0547">Nucleotide-binding</keyword>
<keyword id="KW-1185">Reference proteome</keyword>
<keyword id="KW-0809">Transit peptide</keyword>
<keyword id="KW-0816">Tricarboxylic acid cycle</keyword>
<evidence type="ECO:0000255" key="1">
    <source>
        <dbReference type="HAMAP-Rule" id="MF_03219"/>
    </source>
</evidence>
<evidence type="ECO:0000269" key="2">
    <source>
    </source>
</evidence>
<evidence type="ECO:0000312" key="3">
    <source>
        <dbReference type="PomBase" id="SPCC1620.08"/>
    </source>
</evidence>
<protein>
    <recommendedName>
        <fullName evidence="1">Succinate--CoA ligase [ADP-forming] subunit beta, mitochondrial</fullName>
        <ecNumber evidence="1">6.2.1.5</ecNumber>
    </recommendedName>
    <alternativeName>
        <fullName evidence="1">Succinyl-CoA synthetase beta chain</fullName>
        <shortName evidence="1">SCS-beta</shortName>
    </alternativeName>
</protein>
<accession>O94415</accession>
<comment type="function">
    <text evidence="1">Succinyl-CoA synthetase functions in the citric acid cycle (TCA), coupling the hydrolysis of succinyl-CoA to the synthesis of ATP and thus represents the only step of substrate-level phosphorylation in the TCA. The beta subunit provides nucleotide specificity of the enzyme and binds the substrate succinate, while the binding sites for coenzyme A and phosphate are found in the alpha subunit.</text>
</comment>
<comment type="catalytic activity">
    <reaction evidence="1">
        <text>succinate + ATP + CoA = succinyl-CoA + ADP + phosphate</text>
        <dbReference type="Rhea" id="RHEA:17661"/>
        <dbReference type="ChEBI" id="CHEBI:30031"/>
        <dbReference type="ChEBI" id="CHEBI:30616"/>
        <dbReference type="ChEBI" id="CHEBI:43474"/>
        <dbReference type="ChEBI" id="CHEBI:57287"/>
        <dbReference type="ChEBI" id="CHEBI:57292"/>
        <dbReference type="ChEBI" id="CHEBI:456216"/>
        <dbReference type="EC" id="6.2.1.5"/>
    </reaction>
</comment>
<comment type="cofactor">
    <cofactor evidence="1">
        <name>Mg(2+)</name>
        <dbReference type="ChEBI" id="CHEBI:18420"/>
    </cofactor>
    <text evidence="1">Binds 1 Mg(2+) ion per subunit.</text>
</comment>
<comment type="pathway">
    <text evidence="1">Carbohydrate metabolism; tricarboxylic acid cycle; succinate from succinyl-CoA (ligase route): step 1/1.</text>
</comment>
<comment type="subunit">
    <text evidence="1">Heterodimer of an alpha and a beta subunit.</text>
</comment>
<comment type="subcellular location">
    <subcellularLocation>
        <location evidence="1 2">Mitochondrion</location>
    </subcellularLocation>
</comment>
<comment type="similarity">
    <text evidence="1">Belongs to the succinate/malate CoA ligase beta subunit family.</text>
</comment>